<feature type="chain" id="PRO_0000410099" description="UDP-N-acetylglucosamine transferase subunit ALG13">
    <location>
        <begin position="1"/>
        <end position="200"/>
    </location>
</feature>
<gene>
    <name type="primary">ALG13</name>
    <name type="ordered locus">CNBB0300</name>
</gene>
<keyword id="KW-0256">Endoplasmic reticulum</keyword>
<keyword id="KW-0328">Glycosyltransferase</keyword>
<keyword id="KW-0808">Transferase</keyword>
<protein>
    <recommendedName>
        <fullName>UDP-N-acetylglucosamine transferase subunit ALG13</fullName>
        <ecNumber>2.4.1.141</ecNumber>
    </recommendedName>
    <alternativeName>
        <fullName>Asparagine-linked glycosylation protein 13</fullName>
    </alternativeName>
</protein>
<sequence>MAHPFTLLVTVGSTLFPSLTSHVLLPTFLSLLQSLGVQRLVVQYGRAELKLQDDVKQTLNIDSQGDGIGVWSDNDGDRVRDEKQNGMVVEVMRFTNDFEGLVGKSDAVISHAGSGSILTVLRRAPPIPLLVVPNRSLMDDHQSELADALYKDGYVMVASVEDLEEKVQPFLKIWPSQAKLFPETRKEVFREVVDDLMGYD</sequence>
<name>ALG13_CRYNB</name>
<organism>
    <name type="scientific">Cryptococcus neoformans var. neoformans serotype D (strain B-3501A)</name>
    <name type="common">Filobasidiella neoformans</name>
    <dbReference type="NCBI Taxonomy" id="283643"/>
    <lineage>
        <taxon>Eukaryota</taxon>
        <taxon>Fungi</taxon>
        <taxon>Dikarya</taxon>
        <taxon>Basidiomycota</taxon>
        <taxon>Agaricomycotina</taxon>
        <taxon>Tremellomycetes</taxon>
        <taxon>Tremellales</taxon>
        <taxon>Cryptococcaceae</taxon>
        <taxon>Cryptococcus</taxon>
        <taxon>Cryptococcus neoformans species complex</taxon>
    </lineage>
</organism>
<proteinExistence type="inferred from homology"/>
<comment type="function">
    <text evidence="1">Involved in protein N-glycosylation. Essential for the second step of the dolichol-linked oligosaccharide pathway (By similarity).</text>
</comment>
<comment type="catalytic activity">
    <reaction>
        <text>an N-acetyl-alpha-D-glucosaminyl-diphospho-di-trans,poly-cis-dolichol + UDP-N-acetyl-alpha-D-glucosamine = an N,N'-diacetylchitobiosyl-diphospho-di-trans,poly-cis-dolichol + UDP + H(+)</text>
        <dbReference type="Rhea" id="RHEA:23380"/>
        <dbReference type="Rhea" id="RHEA-COMP:19507"/>
        <dbReference type="Rhea" id="RHEA-COMP:19510"/>
        <dbReference type="ChEBI" id="CHEBI:15378"/>
        <dbReference type="ChEBI" id="CHEBI:57269"/>
        <dbReference type="ChEBI" id="CHEBI:57705"/>
        <dbReference type="ChEBI" id="CHEBI:58223"/>
        <dbReference type="ChEBI" id="CHEBI:58427"/>
        <dbReference type="EC" id="2.4.1.141"/>
    </reaction>
</comment>
<comment type="subunit">
    <text evidence="1">Heterodimer with ALG14 to form a functional enzyme.</text>
</comment>
<comment type="subcellular location">
    <subcellularLocation>
        <location evidence="1">Endoplasmic reticulum</location>
    </subcellularLocation>
</comment>
<comment type="similarity">
    <text evidence="2">Belongs to the glycosyltransferase 28 family.</text>
</comment>
<accession>P0CN89</accession>
<accession>Q55YI6</accession>
<accession>Q5KLF2</accession>
<reference key="1">
    <citation type="journal article" date="2005" name="Science">
        <title>The genome of the basidiomycetous yeast and human pathogen Cryptococcus neoformans.</title>
        <authorList>
            <person name="Loftus B.J."/>
            <person name="Fung E."/>
            <person name="Roncaglia P."/>
            <person name="Rowley D."/>
            <person name="Amedeo P."/>
            <person name="Bruno D."/>
            <person name="Vamathevan J."/>
            <person name="Miranda M."/>
            <person name="Anderson I.J."/>
            <person name="Fraser J.A."/>
            <person name="Allen J.E."/>
            <person name="Bosdet I.E."/>
            <person name="Brent M.R."/>
            <person name="Chiu R."/>
            <person name="Doering T.L."/>
            <person name="Donlin M.J."/>
            <person name="D'Souza C.A."/>
            <person name="Fox D.S."/>
            <person name="Grinberg V."/>
            <person name="Fu J."/>
            <person name="Fukushima M."/>
            <person name="Haas B.J."/>
            <person name="Huang J.C."/>
            <person name="Janbon G."/>
            <person name="Jones S.J.M."/>
            <person name="Koo H.L."/>
            <person name="Krzywinski M.I."/>
            <person name="Kwon-Chung K.J."/>
            <person name="Lengeler K.B."/>
            <person name="Maiti R."/>
            <person name="Marra M.A."/>
            <person name="Marra R.E."/>
            <person name="Mathewson C.A."/>
            <person name="Mitchell T.G."/>
            <person name="Pertea M."/>
            <person name="Riggs F.R."/>
            <person name="Salzberg S.L."/>
            <person name="Schein J.E."/>
            <person name="Shvartsbeyn A."/>
            <person name="Shin H."/>
            <person name="Shumway M."/>
            <person name="Specht C.A."/>
            <person name="Suh B.B."/>
            <person name="Tenney A."/>
            <person name="Utterback T.R."/>
            <person name="Wickes B.L."/>
            <person name="Wortman J.R."/>
            <person name="Wye N.H."/>
            <person name="Kronstad J.W."/>
            <person name="Lodge J.K."/>
            <person name="Heitman J."/>
            <person name="Davis R.W."/>
            <person name="Fraser C.M."/>
            <person name="Hyman R.W."/>
        </authorList>
    </citation>
    <scope>NUCLEOTIDE SEQUENCE [LARGE SCALE GENOMIC DNA]</scope>
    <source>
        <strain>B-3501A</strain>
    </source>
</reference>
<evidence type="ECO:0000250" key="1"/>
<evidence type="ECO:0000305" key="2"/>
<dbReference type="EC" id="2.4.1.141"/>
<dbReference type="EMBL" id="AAEY01000006">
    <property type="protein sequence ID" value="EAL22809.1"/>
    <property type="molecule type" value="Genomic_DNA"/>
</dbReference>
<dbReference type="RefSeq" id="XP_777456.1">
    <property type="nucleotide sequence ID" value="XM_772363.1"/>
</dbReference>
<dbReference type="SMR" id="P0CN89"/>
<dbReference type="EnsemblFungi" id="AAW41985">
    <property type="protein sequence ID" value="AAW41985"/>
    <property type="gene ID" value="CNB05490"/>
</dbReference>
<dbReference type="GeneID" id="4934141"/>
<dbReference type="KEGG" id="cnb:CNBB0300"/>
<dbReference type="VEuPathDB" id="FungiDB:CNBB0300"/>
<dbReference type="HOGENOM" id="CLU_085408_2_2_1"/>
<dbReference type="OrthoDB" id="7299at5206"/>
<dbReference type="GO" id="GO:0005783">
    <property type="term" value="C:endoplasmic reticulum"/>
    <property type="evidence" value="ECO:0007669"/>
    <property type="project" value="UniProtKB-SubCell"/>
</dbReference>
<dbReference type="GO" id="GO:0004577">
    <property type="term" value="F:N-acetylglucosaminyldiphosphodolichol N-acetylglucosaminyltransferase activity"/>
    <property type="evidence" value="ECO:0007669"/>
    <property type="project" value="UniProtKB-EC"/>
</dbReference>
<dbReference type="GO" id="GO:0006488">
    <property type="term" value="P:dolichol-linked oligosaccharide biosynthetic process"/>
    <property type="evidence" value="ECO:0007669"/>
    <property type="project" value="InterPro"/>
</dbReference>
<dbReference type="Gene3D" id="3.40.50.2000">
    <property type="entry name" value="Glycogen Phosphorylase B"/>
    <property type="match status" value="1"/>
</dbReference>
<dbReference type="InterPro" id="IPR039042">
    <property type="entry name" value="Alg13-like"/>
</dbReference>
<dbReference type="InterPro" id="IPR007235">
    <property type="entry name" value="Glyco_trans_28_C"/>
</dbReference>
<dbReference type="PANTHER" id="PTHR12867">
    <property type="entry name" value="GLYCOSYL TRANSFERASE-RELATED"/>
    <property type="match status" value="1"/>
</dbReference>
<dbReference type="PANTHER" id="PTHR12867:SF6">
    <property type="entry name" value="N-ACETYLGLUCOSAMINYLDIPHOSPHODOLICHOL N-ACETYLGLUCOSAMINYLTRANSFERASE"/>
    <property type="match status" value="1"/>
</dbReference>
<dbReference type="Pfam" id="PF04101">
    <property type="entry name" value="Glyco_tran_28_C"/>
    <property type="match status" value="1"/>
</dbReference>
<dbReference type="SUPFAM" id="SSF53756">
    <property type="entry name" value="UDP-Glycosyltransferase/glycogen phosphorylase"/>
    <property type="match status" value="1"/>
</dbReference>